<evidence type="ECO:0000250" key="1">
    <source>
        <dbReference type="UniProtKB" id="Q8IXI2"/>
    </source>
</evidence>
<evidence type="ECO:0000250" key="2">
    <source>
        <dbReference type="UniProtKB" id="Q8JZN7"/>
    </source>
</evidence>
<evidence type="ECO:0000255" key="3"/>
<evidence type="ECO:0000255" key="4">
    <source>
        <dbReference type="PROSITE-ProRule" id="PRU00448"/>
    </source>
</evidence>
<evidence type="ECO:0000255" key="5">
    <source>
        <dbReference type="PROSITE-ProRule" id="PRU00757"/>
    </source>
</evidence>
<evidence type="ECO:0000269" key="6">
    <source>
    </source>
</evidence>
<evidence type="ECO:0000269" key="7">
    <source>
    </source>
</evidence>
<evidence type="ECO:0000269" key="8">
    <source>
    </source>
</evidence>
<evidence type="ECO:0000269" key="9">
    <source>
    </source>
</evidence>
<evidence type="ECO:0000269" key="10">
    <source>
    </source>
</evidence>
<evidence type="ECO:0000269" key="11">
    <source>
    </source>
</evidence>
<evidence type="ECO:0000269" key="12">
    <source>
    </source>
</evidence>
<evidence type="ECO:0000269" key="13">
    <source>
    </source>
</evidence>
<evidence type="ECO:0000269" key="14">
    <source>
    </source>
</evidence>
<evidence type="ECO:0000303" key="15">
    <source>
    </source>
</evidence>
<evidence type="ECO:0000303" key="16">
    <source ref="4"/>
</evidence>
<evidence type="ECO:0000305" key="17"/>
<evidence type="ECO:0000305" key="18">
    <source>
    </source>
</evidence>
<evidence type="ECO:0000305" key="19">
    <source>
    </source>
</evidence>
<evidence type="ECO:0007744" key="20">
    <source>
        <dbReference type="PDB" id="5KUT"/>
    </source>
</evidence>
<evidence type="ECO:0007829" key="21">
    <source>
        <dbReference type="PDB" id="5KUT"/>
    </source>
</evidence>
<keyword id="KW-0002">3D-structure</keyword>
<keyword id="KW-0025">Alternative splicing</keyword>
<keyword id="KW-0106">Calcium</keyword>
<keyword id="KW-0342">GTP-binding</keyword>
<keyword id="KW-0378">Hydrolase</keyword>
<keyword id="KW-1017">Isopeptide bond</keyword>
<keyword id="KW-0460">Magnesium</keyword>
<keyword id="KW-0472">Membrane</keyword>
<keyword id="KW-0479">Metal-binding</keyword>
<keyword id="KW-0496">Mitochondrion</keyword>
<keyword id="KW-1000">Mitochondrion outer membrane</keyword>
<keyword id="KW-0547">Nucleotide-binding</keyword>
<keyword id="KW-1267">Proteomics identification</keyword>
<keyword id="KW-1185">Reference proteome</keyword>
<keyword id="KW-0677">Repeat</keyword>
<keyword id="KW-0812">Transmembrane</keyword>
<keyword id="KW-1133">Transmembrane helix</keyword>
<keyword id="KW-0832">Ubl conjugation</keyword>
<gene>
    <name type="primary">RHOT2</name>
    <name type="synonym">ARHT2</name>
    <name type="synonym">C16orf39</name>
</gene>
<protein>
    <recommendedName>
        <fullName>Mitochondrial Rho GTPase 2</fullName>
        <shortName>MIRO-2</shortName>
        <shortName>hMiro-2</shortName>
        <ecNumber evidence="1">3.6.5.-</ecNumber>
    </recommendedName>
    <alternativeName>
        <fullName>Ras homolog gene family member T2</fullName>
    </alternativeName>
</protein>
<dbReference type="EC" id="3.6.5.-" evidence="1"/>
<dbReference type="EMBL" id="AJ517413">
    <property type="protein sequence ID" value="CAD56957.1"/>
    <property type="molecule type" value="mRNA"/>
</dbReference>
<dbReference type="EMBL" id="AY207375">
    <property type="protein sequence ID" value="AAP46090.1"/>
    <property type="molecule type" value="mRNA"/>
</dbReference>
<dbReference type="EMBL" id="AK024450">
    <property type="protein sequence ID" value="BAB15740.1"/>
    <property type="status" value="ALT_INIT"/>
    <property type="molecule type" value="mRNA"/>
</dbReference>
<dbReference type="EMBL" id="AK090426">
    <property type="protein sequence ID" value="BAC03407.1"/>
    <property type="status" value="ALT_INIT"/>
    <property type="molecule type" value="mRNA"/>
</dbReference>
<dbReference type="EMBL" id="AE006464">
    <property type="protein sequence ID" value="AAK61240.1"/>
    <property type="status" value="ALT_SEQ"/>
    <property type="molecule type" value="Genomic_DNA"/>
</dbReference>
<dbReference type="EMBL" id="Z92544">
    <property type="status" value="NOT_ANNOTATED_CDS"/>
    <property type="molecule type" value="Genomic_DNA"/>
</dbReference>
<dbReference type="EMBL" id="CH471112">
    <property type="protein sequence ID" value="EAW85763.1"/>
    <property type="molecule type" value="Genomic_DNA"/>
</dbReference>
<dbReference type="EMBL" id="BC004327">
    <property type="protein sequence ID" value="AAH04327.1"/>
    <property type="molecule type" value="mRNA"/>
</dbReference>
<dbReference type="EMBL" id="BC014942">
    <property type="protein sequence ID" value="AAH14942.1"/>
    <property type="molecule type" value="mRNA"/>
</dbReference>
<dbReference type="CCDS" id="CCDS10417.1">
    <molecule id="Q8IXI1-1"/>
</dbReference>
<dbReference type="RefSeq" id="NP_620124.1">
    <molecule id="Q8IXI1-1"/>
    <property type="nucleotide sequence ID" value="NM_138769.3"/>
</dbReference>
<dbReference type="PDB" id="5KUT">
    <property type="method" value="X-ray"/>
    <property type="resolution" value="1.69 A"/>
    <property type="chains" value="A/B/C=409-588"/>
</dbReference>
<dbReference type="PDBsum" id="5KUT"/>
<dbReference type="SMR" id="Q8IXI1"/>
<dbReference type="BioGRID" id="124646">
    <property type="interactions" value="347"/>
</dbReference>
<dbReference type="CORUM" id="Q8IXI1"/>
<dbReference type="FunCoup" id="Q8IXI1">
    <property type="interactions" value="2686"/>
</dbReference>
<dbReference type="IntAct" id="Q8IXI1">
    <property type="interactions" value="83"/>
</dbReference>
<dbReference type="MINT" id="Q8IXI1"/>
<dbReference type="STRING" id="9606.ENSP00000321971"/>
<dbReference type="iPTMnet" id="Q8IXI1"/>
<dbReference type="PhosphoSitePlus" id="Q8IXI1"/>
<dbReference type="SwissPalm" id="Q8IXI1"/>
<dbReference type="BioMuta" id="RHOT2"/>
<dbReference type="DMDM" id="108860798"/>
<dbReference type="jPOST" id="Q8IXI1"/>
<dbReference type="MassIVE" id="Q8IXI1"/>
<dbReference type="PaxDb" id="9606-ENSP00000321971"/>
<dbReference type="PeptideAtlas" id="Q8IXI1"/>
<dbReference type="ProteomicsDB" id="71000">
    <molecule id="Q8IXI1-1"/>
</dbReference>
<dbReference type="ProteomicsDB" id="71001">
    <molecule id="Q8IXI1-2"/>
</dbReference>
<dbReference type="Pumba" id="Q8IXI1"/>
<dbReference type="ABCD" id="Q8IXI1">
    <property type="antibodies" value="1 sequenced antibody"/>
</dbReference>
<dbReference type="Antibodypedia" id="2477">
    <property type="antibodies" value="152 antibodies from 27 providers"/>
</dbReference>
<dbReference type="DNASU" id="89941"/>
<dbReference type="Ensembl" id="ENST00000315082.9">
    <molecule id="Q8IXI1-1"/>
    <property type="protein sequence ID" value="ENSP00000321971.4"/>
    <property type="gene ID" value="ENSG00000140983.15"/>
</dbReference>
<dbReference type="GeneID" id="89941"/>
<dbReference type="KEGG" id="hsa:89941"/>
<dbReference type="MANE-Select" id="ENST00000315082.9">
    <property type="protein sequence ID" value="ENSP00000321971.4"/>
    <property type="RefSeq nucleotide sequence ID" value="NM_138769.3"/>
    <property type="RefSeq protein sequence ID" value="NP_620124.1"/>
</dbReference>
<dbReference type="UCSC" id="uc002cip.4">
    <molecule id="Q8IXI1-1"/>
    <property type="organism name" value="human"/>
</dbReference>
<dbReference type="AGR" id="HGNC:21169"/>
<dbReference type="CTD" id="89941"/>
<dbReference type="DisGeNET" id="89941"/>
<dbReference type="GeneCards" id="RHOT2"/>
<dbReference type="HGNC" id="HGNC:21169">
    <property type="gene designation" value="RHOT2"/>
</dbReference>
<dbReference type="HPA" id="ENSG00000140983">
    <property type="expression patterns" value="Low tissue specificity"/>
</dbReference>
<dbReference type="MIM" id="613889">
    <property type="type" value="gene"/>
</dbReference>
<dbReference type="neXtProt" id="NX_Q8IXI1"/>
<dbReference type="OpenTargets" id="ENSG00000140983"/>
<dbReference type="PharmGKB" id="PA134889674"/>
<dbReference type="VEuPathDB" id="HostDB:ENSG00000140983"/>
<dbReference type="eggNOG" id="KOG1707">
    <property type="taxonomic scope" value="Eukaryota"/>
</dbReference>
<dbReference type="GeneTree" id="ENSGT00940000158109"/>
<dbReference type="HOGENOM" id="CLU_014255_3_1_1"/>
<dbReference type="InParanoid" id="Q8IXI1"/>
<dbReference type="OMA" id="FWFAQKA"/>
<dbReference type="OrthoDB" id="10020961at2759"/>
<dbReference type="PAN-GO" id="Q8IXI1">
    <property type="GO annotations" value="6 GO annotations based on evolutionary models"/>
</dbReference>
<dbReference type="PhylomeDB" id="Q8IXI1"/>
<dbReference type="TreeFam" id="TF300814"/>
<dbReference type="PathwayCommons" id="Q8IXI1"/>
<dbReference type="Reactome" id="R-HSA-9013419">
    <property type="pathway name" value="RHOT2 GTPase cycle"/>
</dbReference>
<dbReference type="SignaLink" id="Q8IXI1"/>
<dbReference type="SIGNOR" id="Q8IXI1"/>
<dbReference type="BioGRID-ORCS" id="89941">
    <property type="hits" value="46 hits in 1170 CRISPR screens"/>
</dbReference>
<dbReference type="CD-CODE" id="FB4E32DD">
    <property type="entry name" value="Presynaptic clusters and postsynaptic densities"/>
</dbReference>
<dbReference type="ChiTaRS" id="RHOT2">
    <property type="organism name" value="human"/>
</dbReference>
<dbReference type="GeneWiki" id="RHOT2"/>
<dbReference type="GenomeRNAi" id="89941"/>
<dbReference type="Pharos" id="Q8IXI1">
    <property type="development level" value="Tbio"/>
</dbReference>
<dbReference type="PRO" id="PR:Q8IXI1"/>
<dbReference type="Proteomes" id="UP000005640">
    <property type="component" value="Chromosome 16"/>
</dbReference>
<dbReference type="RNAct" id="Q8IXI1">
    <property type="molecule type" value="protein"/>
</dbReference>
<dbReference type="Bgee" id="ENSG00000140983">
    <property type="expression patterns" value="Expressed in right hemisphere of cerebellum and 176 other cell types or tissues"/>
</dbReference>
<dbReference type="ExpressionAtlas" id="Q8IXI1">
    <property type="expression patterns" value="baseline and differential"/>
</dbReference>
<dbReference type="GO" id="GO:0016020">
    <property type="term" value="C:membrane"/>
    <property type="evidence" value="ECO:0007005"/>
    <property type="project" value="UniProtKB"/>
</dbReference>
<dbReference type="GO" id="GO:0005741">
    <property type="term" value="C:mitochondrial outer membrane"/>
    <property type="evidence" value="ECO:0000314"/>
    <property type="project" value="UniProtKB"/>
</dbReference>
<dbReference type="GO" id="GO:0005739">
    <property type="term" value="C:mitochondrion"/>
    <property type="evidence" value="ECO:0000314"/>
    <property type="project" value="HPA"/>
</dbReference>
<dbReference type="GO" id="GO:0005509">
    <property type="term" value="F:calcium ion binding"/>
    <property type="evidence" value="ECO:0007669"/>
    <property type="project" value="InterPro"/>
</dbReference>
<dbReference type="GO" id="GO:0005525">
    <property type="term" value="F:GTP binding"/>
    <property type="evidence" value="ECO:0000318"/>
    <property type="project" value="GO_Central"/>
</dbReference>
<dbReference type="GO" id="GO:0003924">
    <property type="term" value="F:GTPase activity"/>
    <property type="evidence" value="ECO:0000318"/>
    <property type="project" value="GO_Central"/>
</dbReference>
<dbReference type="GO" id="GO:0019725">
    <property type="term" value="P:cellular homeostasis"/>
    <property type="evidence" value="ECO:0000315"/>
    <property type="project" value="UniProtKB"/>
</dbReference>
<dbReference type="GO" id="GO:0097345">
    <property type="term" value="P:mitochondrial outer membrane permeabilization"/>
    <property type="evidence" value="ECO:0000315"/>
    <property type="project" value="UniProtKB"/>
</dbReference>
<dbReference type="GO" id="GO:0007005">
    <property type="term" value="P:mitochondrion organization"/>
    <property type="evidence" value="ECO:0000318"/>
    <property type="project" value="GO_Central"/>
</dbReference>
<dbReference type="GO" id="GO:0047497">
    <property type="term" value="P:mitochondrion transport along microtubule"/>
    <property type="evidence" value="ECO:0000315"/>
    <property type="project" value="UniProtKB"/>
</dbReference>
<dbReference type="CDD" id="cd01893">
    <property type="entry name" value="Miro1"/>
    <property type="match status" value="1"/>
</dbReference>
<dbReference type="CDD" id="cd01892">
    <property type="entry name" value="Miro2"/>
    <property type="match status" value="1"/>
</dbReference>
<dbReference type="FunFam" id="1.10.238.10:FF:000011">
    <property type="entry name" value="Mitochondrial Rho GTPase"/>
    <property type="match status" value="1"/>
</dbReference>
<dbReference type="FunFam" id="1.10.238.10:FF:000021">
    <property type="entry name" value="Mitochondrial Rho GTPase"/>
    <property type="match status" value="1"/>
</dbReference>
<dbReference type="FunFam" id="3.40.50.300:FF:000170">
    <property type="entry name" value="Mitochondrial Rho GTPase"/>
    <property type="match status" value="1"/>
</dbReference>
<dbReference type="FunFam" id="3.40.50.300:FF:001117">
    <property type="entry name" value="Mitochondrial Rho GTPase 2"/>
    <property type="match status" value="1"/>
</dbReference>
<dbReference type="Gene3D" id="1.10.238.10">
    <property type="entry name" value="EF-hand"/>
    <property type="match status" value="2"/>
</dbReference>
<dbReference type="Gene3D" id="3.40.50.300">
    <property type="entry name" value="P-loop containing nucleotide triphosphate hydrolases"/>
    <property type="match status" value="2"/>
</dbReference>
<dbReference type="InterPro" id="IPR011992">
    <property type="entry name" value="EF-hand-dom_pair"/>
</dbReference>
<dbReference type="InterPro" id="IPR018247">
    <property type="entry name" value="EF_Hand_1_Ca_BS"/>
</dbReference>
<dbReference type="InterPro" id="IPR013566">
    <property type="entry name" value="EF_hand_assoc_1"/>
</dbReference>
<dbReference type="InterPro" id="IPR013567">
    <property type="entry name" value="EF_hand_assoc_2"/>
</dbReference>
<dbReference type="InterPro" id="IPR002048">
    <property type="entry name" value="EF_hand_dom"/>
</dbReference>
<dbReference type="InterPro" id="IPR021181">
    <property type="entry name" value="Miro"/>
</dbReference>
<dbReference type="InterPro" id="IPR052266">
    <property type="entry name" value="Miro-EF-hand_domain"/>
</dbReference>
<dbReference type="InterPro" id="IPR020860">
    <property type="entry name" value="MIRO_dom"/>
</dbReference>
<dbReference type="InterPro" id="IPR027417">
    <property type="entry name" value="P-loop_NTPase"/>
</dbReference>
<dbReference type="InterPro" id="IPR001806">
    <property type="entry name" value="Small_GTPase"/>
</dbReference>
<dbReference type="PANTHER" id="PTHR46819">
    <property type="entry name" value="EF-HAND CALCIUM-BINDING DOMAIN-CONTAINING PROTEIN 7"/>
    <property type="match status" value="1"/>
</dbReference>
<dbReference type="PANTHER" id="PTHR46819:SF1">
    <property type="entry name" value="EF-HAND CALCIUM-BINDING DOMAIN-CONTAINING PROTEIN 7"/>
    <property type="match status" value="1"/>
</dbReference>
<dbReference type="Pfam" id="PF08355">
    <property type="entry name" value="EF_assoc_1"/>
    <property type="match status" value="1"/>
</dbReference>
<dbReference type="Pfam" id="PF08356">
    <property type="entry name" value="EF_assoc_2"/>
    <property type="match status" value="1"/>
</dbReference>
<dbReference type="Pfam" id="PF00071">
    <property type="entry name" value="Ras"/>
    <property type="match status" value="1"/>
</dbReference>
<dbReference type="PIRSF" id="PIRSF037488">
    <property type="entry name" value="Mt_Rho_GTPase"/>
    <property type="match status" value="1"/>
</dbReference>
<dbReference type="PRINTS" id="PR00449">
    <property type="entry name" value="RASTRNSFRMNG"/>
</dbReference>
<dbReference type="SMART" id="SM00175">
    <property type="entry name" value="RAB"/>
    <property type="match status" value="1"/>
</dbReference>
<dbReference type="SMART" id="SM00173">
    <property type="entry name" value="RAS"/>
    <property type="match status" value="1"/>
</dbReference>
<dbReference type="SMART" id="SM00174">
    <property type="entry name" value="RHO"/>
    <property type="match status" value="1"/>
</dbReference>
<dbReference type="SUPFAM" id="SSF47473">
    <property type="entry name" value="EF-hand"/>
    <property type="match status" value="1"/>
</dbReference>
<dbReference type="SUPFAM" id="SSF52540">
    <property type="entry name" value="P-loop containing nucleoside triphosphate hydrolases"/>
    <property type="match status" value="2"/>
</dbReference>
<dbReference type="PROSITE" id="PS00018">
    <property type="entry name" value="EF_HAND_1"/>
    <property type="match status" value="1"/>
</dbReference>
<dbReference type="PROSITE" id="PS50222">
    <property type="entry name" value="EF_HAND_2"/>
    <property type="match status" value="2"/>
</dbReference>
<dbReference type="PROSITE" id="PS51423">
    <property type="entry name" value="MIRO"/>
    <property type="match status" value="2"/>
</dbReference>
<accession>Q8IXI1</accession>
<accession>A2IDC2</accession>
<accession>Q8NF53</accession>
<accession>Q96C13</accession>
<accession>Q96S17</accession>
<accession>Q9BT60</accession>
<accession>Q9H7M8</accession>
<feature type="chain" id="PRO_0000239318" description="Mitochondrial Rho GTPase 2">
    <location>
        <begin position="1"/>
        <end position="618"/>
    </location>
</feature>
<feature type="topological domain" description="Cytoplasmic" evidence="3">
    <location>
        <begin position="1"/>
        <end position="592"/>
    </location>
</feature>
<feature type="transmembrane region" description="Helical; Anchor for type IV membrane protein" evidence="3">
    <location>
        <begin position="593"/>
        <end position="615"/>
    </location>
</feature>
<feature type="topological domain" description="Mitochondrial intermembrane" evidence="3">
    <location>
        <begin position="616"/>
        <end position="618"/>
    </location>
</feature>
<feature type="domain" description="Miro 1" evidence="5">
    <location>
        <begin position="2"/>
        <end position="168"/>
    </location>
</feature>
<feature type="domain" description="EF-hand 1" evidence="4">
    <location>
        <begin position="184"/>
        <end position="219"/>
    </location>
</feature>
<feature type="domain" description="EF-hand 2" evidence="4">
    <location>
        <begin position="304"/>
        <end position="339"/>
    </location>
</feature>
<feature type="domain" description="Miro 2" evidence="5">
    <location>
        <begin position="414"/>
        <end position="576"/>
    </location>
</feature>
<feature type="binding site" evidence="1">
    <location>
        <position position="16"/>
    </location>
    <ligand>
        <name>GTP</name>
        <dbReference type="ChEBI" id="CHEBI:37565"/>
        <label>1</label>
    </ligand>
</feature>
<feature type="binding site" evidence="1">
    <location>
        <position position="17"/>
    </location>
    <ligand>
        <name>GTP</name>
        <dbReference type="ChEBI" id="CHEBI:37565"/>
        <label>1</label>
    </ligand>
</feature>
<feature type="binding site" evidence="1">
    <location>
        <position position="18"/>
    </location>
    <ligand>
        <name>GTP</name>
        <dbReference type="ChEBI" id="CHEBI:37565"/>
        <label>1</label>
    </ligand>
</feature>
<feature type="binding site" evidence="1">
    <location>
        <position position="18"/>
    </location>
    <ligand>
        <name>Mg(2+)</name>
        <dbReference type="ChEBI" id="CHEBI:18420"/>
        <label>1</label>
    </ligand>
</feature>
<feature type="binding site" evidence="1">
    <location>
        <position position="19"/>
    </location>
    <ligand>
        <name>GTP</name>
        <dbReference type="ChEBI" id="CHEBI:37565"/>
        <label>1</label>
    </ligand>
</feature>
<feature type="binding site" evidence="1">
    <location>
        <position position="35"/>
    </location>
    <ligand>
        <name>Mg(2+)</name>
        <dbReference type="ChEBI" id="CHEBI:18420"/>
        <label>1</label>
    </ligand>
</feature>
<feature type="binding site" evidence="1">
    <location>
        <position position="57"/>
    </location>
    <ligand>
        <name>Mg(2+)</name>
        <dbReference type="ChEBI" id="CHEBI:18420"/>
        <label>1</label>
    </ligand>
</feature>
<feature type="binding site" evidence="1">
    <location>
        <position position="59"/>
    </location>
    <ligand>
        <name>GTP</name>
        <dbReference type="ChEBI" id="CHEBI:37565"/>
        <label>1</label>
    </ligand>
</feature>
<feature type="binding site" evidence="1">
    <location>
        <position position="118"/>
    </location>
    <ligand>
        <name>GTP</name>
        <dbReference type="ChEBI" id="CHEBI:37565"/>
        <label>1</label>
    </ligand>
</feature>
<feature type="binding site" evidence="1">
    <location>
        <position position="119"/>
    </location>
    <ligand>
        <name>GTP</name>
        <dbReference type="ChEBI" id="CHEBI:37565"/>
        <label>1</label>
    </ligand>
</feature>
<feature type="binding site" evidence="1">
    <location>
        <position position="121"/>
    </location>
    <ligand>
        <name>GTP</name>
        <dbReference type="ChEBI" id="CHEBI:37565"/>
        <label>1</label>
    </ligand>
</feature>
<feature type="binding site" evidence="1">
    <location>
        <position position="149"/>
    </location>
    <ligand>
        <name>GTP</name>
        <dbReference type="ChEBI" id="CHEBI:37565"/>
        <label>1</label>
    </ligand>
</feature>
<feature type="binding site" evidence="1">
    <location>
        <position position="150"/>
    </location>
    <ligand>
        <name>GTP</name>
        <dbReference type="ChEBI" id="CHEBI:37565"/>
        <label>1</label>
    </ligand>
</feature>
<feature type="binding site" evidence="4">
    <location>
        <position position="197"/>
    </location>
    <ligand>
        <name>Ca(2+)</name>
        <dbReference type="ChEBI" id="CHEBI:29108"/>
        <label>1</label>
    </ligand>
</feature>
<feature type="binding site" evidence="4">
    <location>
        <position position="199"/>
    </location>
    <ligand>
        <name>Ca(2+)</name>
        <dbReference type="ChEBI" id="CHEBI:29108"/>
        <label>1</label>
    </ligand>
</feature>
<feature type="binding site" evidence="4">
    <location>
        <position position="201"/>
    </location>
    <ligand>
        <name>Ca(2+)</name>
        <dbReference type="ChEBI" id="CHEBI:29108"/>
        <label>1</label>
    </ligand>
</feature>
<feature type="binding site" evidence="4">
    <location>
        <position position="208"/>
    </location>
    <ligand>
        <name>Ca(2+)</name>
        <dbReference type="ChEBI" id="CHEBI:29108"/>
        <label>1</label>
    </ligand>
</feature>
<feature type="binding site" evidence="4">
    <location>
        <position position="317"/>
    </location>
    <ligand>
        <name>Ca(2+)</name>
        <dbReference type="ChEBI" id="CHEBI:29108"/>
        <label>2</label>
    </ligand>
</feature>
<feature type="binding site" evidence="4">
    <location>
        <position position="319"/>
    </location>
    <ligand>
        <name>Ca(2+)</name>
        <dbReference type="ChEBI" id="CHEBI:29108"/>
        <label>2</label>
    </ligand>
</feature>
<feature type="binding site" evidence="4">
    <location>
        <position position="321"/>
    </location>
    <ligand>
        <name>Ca(2+)</name>
        <dbReference type="ChEBI" id="CHEBI:29108"/>
        <label>2</label>
    </ligand>
</feature>
<feature type="binding site" evidence="4">
    <location>
        <position position="328"/>
    </location>
    <ligand>
        <name>Ca(2+)</name>
        <dbReference type="ChEBI" id="CHEBI:29108"/>
        <label>2</label>
    </ligand>
</feature>
<feature type="binding site" evidence="13 20">
    <location>
        <position position="426"/>
    </location>
    <ligand>
        <name>GDP</name>
        <dbReference type="ChEBI" id="CHEBI:58189"/>
    </ligand>
</feature>
<feature type="binding site" evidence="18 20">
    <location>
        <position position="426"/>
    </location>
    <ligand>
        <name>GTP</name>
        <dbReference type="ChEBI" id="CHEBI:37565"/>
        <label>2</label>
    </ligand>
</feature>
<feature type="binding site" evidence="13 20">
    <location>
        <position position="428"/>
    </location>
    <ligand>
        <name>GDP</name>
        <dbReference type="ChEBI" id="CHEBI:58189"/>
    </ligand>
</feature>
<feature type="binding site" evidence="18 20">
    <location>
        <position position="428"/>
    </location>
    <ligand>
        <name>GTP</name>
        <dbReference type="ChEBI" id="CHEBI:37565"/>
        <label>2</label>
    </ligand>
</feature>
<feature type="binding site" evidence="13 20">
    <location>
        <position position="429"/>
    </location>
    <ligand>
        <name>GDP</name>
        <dbReference type="ChEBI" id="CHEBI:58189"/>
    </ligand>
</feature>
<feature type="binding site" evidence="18 20">
    <location>
        <position position="429"/>
    </location>
    <ligand>
        <name>GTP</name>
        <dbReference type="ChEBI" id="CHEBI:37565"/>
        <label>2</label>
    </ligand>
</feature>
<feature type="binding site" evidence="13 20">
    <location>
        <position position="430"/>
    </location>
    <ligand>
        <name>GDP</name>
        <dbReference type="ChEBI" id="CHEBI:58189"/>
    </ligand>
</feature>
<feature type="binding site" evidence="18 20">
    <location>
        <position position="430"/>
    </location>
    <ligand>
        <name>GTP</name>
        <dbReference type="ChEBI" id="CHEBI:37565"/>
        <label>2</label>
    </ligand>
</feature>
<feature type="binding site" evidence="13 20">
    <location>
        <position position="430"/>
    </location>
    <ligand>
        <name>Mg(2+)</name>
        <dbReference type="ChEBI" id="CHEBI:18420"/>
        <label>2</label>
    </ligand>
</feature>
<feature type="binding site" evidence="13 20">
    <location>
        <position position="431"/>
    </location>
    <ligand>
        <name>GDP</name>
        <dbReference type="ChEBI" id="CHEBI:58189"/>
    </ligand>
</feature>
<feature type="binding site" evidence="18 20">
    <location>
        <position position="431"/>
    </location>
    <ligand>
        <name>GTP</name>
        <dbReference type="ChEBI" id="CHEBI:37565"/>
        <label>2</label>
    </ligand>
</feature>
<feature type="binding site" evidence="13 20">
    <location>
        <position position="471"/>
    </location>
    <ligand>
        <name>Mg(2+)</name>
        <dbReference type="ChEBI" id="CHEBI:18420"/>
        <label>2</label>
    </ligand>
</feature>
<feature type="binding site" evidence="13 20">
    <location>
        <position position="525"/>
    </location>
    <ligand>
        <name>GDP</name>
        <dbReference type="ChEBI" id="CHEBI:58189"/>
    </ligand>
</feature>
<feature type="binding site" evidence="18 20">
    <location>
        <position position="525"/>
    </location>
    <ligand>
        <name>GTP</name>
        <dbReference type="ChEBI" id="CHEBI:37565"/>
        <label>2</label>
    </ligand>
</feature>
<feature type="binding site" evidence="13 20">
    <location>
        <position position="527"/>
    </location>
    <ligand>
        <name>GDP</name>
        <dbReference type="ChEBI" id="CHEBI:58189"/>
    </ligand>
</feature>
<feature type="binding site" evidence="18 20">
    <location>
        <position position="527"/>
    </location>
    <ligand>
        <name>GTP</name>
        <dbReference type="ChEBI" id="CHEBI:37565"/>
        <label>2</label>
    </ligand>
</feature>
<feature type="binding site" evidence="13 20">
    <location>
        <position position="556"/>
    </location>
    <ligand>
        <name>GDP</name>
        <dbReference type="ChEBI" id="CHEBI:58189"/>
    </ligand>
</feature>
<feature type="binding site" evidence="18 20">
    <location>
        <position position="556"/>
    </location>
    <ligand>
        <name>GTP</name>
        <dbReference type="ChEBI" id="CHEBI:37565"/>
        <label>2</label>
    </ligand>
</feature>
<feature type="cross-link" description="Glycyl lysine isopeptide (Lys-Gly) (interchain with G-Cter in ubiquitin)" evidence="13">
    <location>
        <position position="96"/>
    </location>
</feature>
<feature type="cross-link" description="Glycyl lysine isopeptide (Lys-Gly) (interchain with G-Cter in ubiquitin)" evidence="13">
    <location>
        <position position="119"/>
    </location>
</feature>
<feature type="cross-link" description="Glycyl lysine isopeptide (Lys-Gly) (interchain with G-Cter in ubiquitin)" evidence="13">
    <location>
        <position position="164"/>
    </location>
</feature>
<feature type="splice variant" id="VSP_019162" description="In isoform 2." evidence="15 16">
    <location>
        <begin position="1"/>
        <end position="127"/>
    </location>
</feature>
<feature type="splice variant" id="VSP_019163" description="In isoform 2." evidence="15 16">
    <original>FLFLNTLFIQRGRHETTWTILRRFGYSDALELTADYLSPLIHVPPGCSTELNHLGYQFVQRVFEKHDQDRDGALSPVELQSLFSVFPAAP</original>
    <variation>EAGCPPVPGECGEGAVPGAPPALSRCRFPLPEHALHPARPARDHLDHPAALRLQRCPGADCGLSLPSDPRAPRLQHGAQPPWLPVCAESV</variation>
    <location>
        <begin position="251"/>
        <end position="340"/>
    </location>
</feature>
<feature type="splice variant" id="VSP_019164" description="In isoform 2." evidence="15 16">
    <location>
        <begin position="341"/>
        <end position="618"/>
    </location>
</feature>
<feature type="sequence variant" id="VAR_026637" description="In dbSNP:rs1139897." evidence="6">
    <original>R</original>
    <variation>Q</variation>
    <location>
        <position position="245"/>
    </location>
</feature>
<feature type="sequence variant" id="VAR_026638" description="In dbSNP:rs3177338." evidence="6">
    <original>R</original>
    <variation>C</variation>
    <location>
        <position position="425"/>
    </location>
</feature>
<feature type="mutagenesis site" description="Causes constitutive activation inducing an aggregation of the mitochondrial network." evidence="7 9">
    <original>A</original>
    <variation>V</variation>
    <location>
        <position position="13"/>
    </location>
</feature>
<feature type="mutagenesis site" description="Induces an aggregation of the mitochondrial network." evidence="9">
    <original>T</original>
    <variation>N</variation>
    <location>
        <position position="18"/>
    </location>
</feature>
<feature type="sequence conflict" description="In Ref. 1; CAD56957." evidence="17" ref="1">
    <original>P</original>
    <variation>S</variation>
    <location>
        <position position="139"/>
    </location>
</feature>
<feature type="strand" evidence="21">
    <location>
        <begin position="415"/>
        <end position="423"/>
    </location>
</feature>
<feature type="helix" evidence="21">
    <location>
        <begin position="429"/>
        <end position="436"/>
    </location>
</feature>
<feature type="strand" evidence="21">
    <location>
        <begin position="453"/>
        <end position="460"/>
    </location>
</feature>
<feature type="strand" evidence="21">
    <location>
        <begin position="463"/>
        <end position="473"/>
    </location>
</feature>
<feature type="helix" evidence="21">
    <location>
        <begin position="476"/>
        <end position="479"/>
    </location>
</feature>
<feature type="strand" evidence="21">
    <location>
        <begin position="486"/>
        <end position="494"/>
    </location>
</feature>
<feature type="helix" evidence="21">
    <location>
        <begin position="500"/>
        <end position="511"/>
    </location>
</feature>
<feature type="turn" evidence="21">
    <location>
        <begin position="512"/>
        <end position="514"/>
    </location>
</feature>
<feature type="strand" evidence="21">
    <location>
        <begin position="515"/>
        <end position="517"/>
    </location>
</feature>
<feature type="strand" evidence="21">
    <location>
        <begin position="519"/>
        <end position="524"/>
    </location>
</feature>
<feature type="strand" evidence="21">
    <location>
        <begin position="534"/>
        <end position="536"/>
    </location>
</feature>
<feature type="helix" evidence="21">
    <location>
        <begin position="539"/>
        <end position="545"/>
    </location>
</feature>
<feature type="strand" evidence="21">
    <location>
        <begin position="558"/>
        <end position="560"/>
    </location>
</feature>
<feature type="helix" evidence="21">
    <location>
        <begin position="565"/>
        <end position="575"/>
    </location>
</feature>
<feature type="helix" evidence="21">
    <location>
        <begin position="577"/>
        <end position="579"/>
    </location>
</feature>
<proteinExistence type="evidence at protein level"/>
<comment type="function">
    <text evidence="1 9 11 14">Atypical mitochondrial nucleoside-triphosphatase (NTPase) involved in mitochondrial trafficking (PubMed:16630562, PubMed:22396657, PubMed:30513825). Probably involved in control of anterograde transport of mitochondria and their subcellular distribution (PubMed:22396657). Can hydrolyze GTP (By similarity). Can hydrolyze ATP and UTP (PubMed:30513825).</text>
</comment>
<comment type="catalytic activity">
    <reaction evidence="1">
        <text>GTP + H2O = GDP + phosphate + H(+)</text>
        <dbReference type="Rhea" id="RHEA:19669"/>
        <dbReference type="ChEBI" id="CHEBI:15377"/>
        <dbReference type="ChEBI" id="CHEBI:15378"/>
        <dbReference type="ChEBI" id="CHEBI:37565"/>
        <dbReference type="ChEBI" id="CHEBI:43474"/>
        <dbReference type="ChEBI" id="CHEBI:58189"/>
    </reaction>
    <physiologicalReaction direction="left-to-right" evidence="1">
        <dbReference type="Rhea" id="RHEA:19670"/>
    </physiologicalReaction>
</comment>
<comment type="catalytic activity">
    <reaction evidence="14">
        <text>ATP + H2O = ADP + phosphate + H(+)</text>
        <dbReference type="Rhea" id="RHEA:13065"/>
        <dbReference type="ChEBI" id="CHEBI:15377"/>
        <dbReference type="ChEBI" id="CHEBI:15378"/>
        <dbReference type="ChEBI" id="CHEBI:30616"/>
        <dbReference type="ChEBI" id="CHEBI:43474"/>
        <dbReference type="ChEBI" id="CHEBI:456216"/>
    </reaction>
    <physiologicalReaction direction="left-to-right" evidence="19">
        <dbReference type="Rhea" id="RHEA:13066"/>
    </physiologicalReaction>
</comment>
<comment type="catalytic activity">
    <reaction evidence="14">
        <text>UTP + H2O = UDP + phosphate + H(+)</text>
        <dbReference type="Rhea" id="RHEA:64900"/>
        <dbReference type="ChEBI" id="CHEBI:15377"/>
        <dbReference type="ChEBI" id="CHEBI:15378"/>
        <dbReference type="ChEBI" id="CHEBI:43474"/>
        <dbReference type="ChEBI" id="CHEBI:46398"/>
        <dbReference type="ChEBI" id="CHEBI:58223"/>
    </reaction>
    <physiologicalReaction direction="left-to-right" evidence="19">
        <dbReference type="Rhea" id="RHEA:64901"/>
    </physiologicalReaction>
</comment>
<comment type="subunit">
    <text evidence="2 9 12 13">Homodimer (PubMed:27605430). Interacts with the kinesin-binding proteins TRAK1/OIP106 and TRAK2/GRIF1, forming a link between mitochondria and the trafficking apparatus of the microtubules (PubMed:16630562). Interacts with ARMCX3 (By similarity). Found in a complex with KIF5B, OGT, RHOT1 and TRAK1 (PubMed:24995978).</text>
</comment>
<comment type="interaction">
    <interactant intactId="EBI-1396563">
        <id>Q8IXI1</id>
    </interactant>
    <interactant intactId="EBI-3920694">
        <id>Q9NR31</id>
        <label>SAR1A</label>
    </interactant>
    <organismsDiffer>false</organismsDiffer>
    <experiments>3</experiments>
</comment>
<comment type="interaction">
    <interactant intactId="EBI-1396563">
        <id>Q8IXI1</id>
    </interactant>
    <interactant intactId="EBI-8638294">
        <id>Q9NUH8</id>
        <label>TMEM14B</label>
    </interactant>
    <organismsDiffer>false</organismsDiffer>
    <experiments>3</experiments>
</comment>
<comment type="interaction">
    <interactant intactId="EBI-1396563">
        <id>Q8IXI1</id>
    </interactant>
    <interactant intactId="EBI-2548832">
        <id>Q8N661</id>
        <label>TMEM86B</label>
    </interactant>
    <organismsDiffer>false</organismsDiffer>
    <experiments>3</experiments>
</comment>
<comment type="interaction">
    <interactant intactId="EBI-1396563">
        <id>Q8IXI1</id>
    </interactant>
    <interactant intactId="EBI-1105048">
        <id>Q9UPV9</id>
        <label>TRAK1</label>
    </interactant>
    <organismsDiffer>false</organismsDiffer>
    <experiments>4</experiments>
</comment>
<comment type="subcellular location">
    <subcellularLocation>
        <location evidence="6 10">Mitochondrion outer membrane</location>
        <topology evidence="6 10">Single-pass type IV membrane protein</topology>
    </subcellularLocation>
    <text>Colocalizes with MGARP and RHOT2 at the mitochondria.</text>
</comment>
<comment type="alternative products">
    <event type="alternative splicing"/>
    <isoform>
        <id>Q8IXI1-1</id>
        <name>1</name>
        <sequence type="displayed"/>
    </isoform>
    <isoform>
        <id>Q8IXI1-2</id>
        <name>2</name>
        <sequence type="described" ref="VSP_019162 VSP_019163 VSP_019164"/>
    </isoform>
</comment>
<comment type="tissue specificity">
    <text evidence="6 8">Ubiquitously expressed. Highly expressed in heart, liver, skeletal muscle, kidney and pancreas.</text>
</comment>
<comment type="domain">
    <text evidence="13">The Miro 2 domain is necessary for efficient ubiquitination by PRKN.</text>
</comment>
<comment type="PTM">
    <text evidence="11 13">Ubiquitinated by PRKN in a PINK1-dependent manner, leading to its degradation.</text>
</comment>
<comment type="similarity">
    <text evidence="5 17">Belongs to the mitochondrial Rho GTPase family.</text>
</comment>
<comment type="sequence caution" evidence="17">
    <conflict type="erroneous gene model prediction">
        <sequence resource="EMBL-CDS" id="AAK61240"/>
    </conflict>
</comment>
<comment type="sequence caution" evidence="17">
    <conflict type="erroneous initiation">
        <sequence resource="EMBL-CDS" id="BAB15740"/>
    </conflict>
    <text>Extended N-terminus.</text>
</comment>
<comment type="sequence caution" evidence="17">
    <conflict type="erroneous initiation">
        <sequence resource="EMBL-CDS" id="BAC03407"/>
    </conflict>
    <text>Extended N-terminus.</text>
</comment>
<organism>
    <name type="scientific">Homo sapiens</name>
    <name type="common">Human</name>
    <dbReference type="NCBI Taxonomy" id="9606"/>
    <lineage>
        <taxon>Eukaryota</taxon>
        <taxon>Metazoa</taxon>
        <taxon>Chordata</taxon>
        <taxon>Craniata</taxon>
        <taxon>Vertebrata</taxon>
        <taxon>Euteleostomi</taxon>
        <taxon>Mammalia</taxon>
        <taxon>Eutheria</taxon>
        <taxon>Euarchontoglires</taxon>
        <taxon>Primates</taxon>
        <taxon>Haplorrhini</taxon>
        <taxon>Catarrhini</taxon>
        <taxon>Hominidae</taxon>
        <taxon>Homo</taxon>
    </lineage>
</organism>
<sequence>MRRDVRILLLGEAQVGKTSLILSLVGEEFPEEVPPRAEEITIPADVTPEKVPTHIVDYSEAEQTDEELREEIHKANVVCVVYDVSEEATIEKIRTKWIPLVNGGTTQGPRVPIILVGNKSDLRSGSSMEAVLPIMSQFPEIETCVECSAKNLRNISELFYYAQKAVLHPTAPLYDPEAKQLRPACAQALTRIFRLSDQDLDQALSDEELNAFQKSCFGHPLAPQALEDVKTVVCRNVAGGVREDRLTLDGFLFLNTLFIQRGRHETTWTILRRFGYSDALELTADYLSPLIHVPPGCSTELNHLGYQFVQRVFEKHDQDRDGALSPVELQSLFSVFPAAPWGPELPRTVRTEAGRLPLHGYLCQWTLVTYLDVRSCLGHLGYLGYPTLCEQDQAHAITVTREKRLDQEKGQTQRSVLLCKVVGARGVGKSAFLQAFLGRGLGHQDTREQPPGYAIDTVQVNGQEKYLILCEVGTDGLLATSLDATCDVACLMFDGSDPKSFAHCASVYKHHYMDGQTPCLFVSSKADLPEGVAVSGPSPAEFCRKHRLPAPVPFSCAGPAEPSTTIFTQLATMAAFPHLVHAELHPSSFWLRGLLGVVGAAVAAVLSFSLYRVLVKSQ</sequence>
<name>MIRO2_HUMAN</name>
<reference key="1">
    <citation type="journal article" date="2003" name="J. Biol. Chem.">
        <title>Atypical Rho GTPases have roles in mitochondrial homeostasis and apoptosis.</title>
        <authorList>
            <person name="Fransson A."/>
            <person name="Ruusala A."/>
            <person name="Aspenstroem P."/>
        </authorList>
    </citation>
    <scope>NUCLEOTIDE SEQUENCE [MRNA] (ISOFORM 1)</scope>
    <scope>SUBCELLULAR LOCATION</scope>
    <scope>TISSUE SPECIFICITY</scope>
    <scope>VARIANTS GLN-245 AND CYS-425</scope>
</reference>
<reference key="2">
    <citation type="journal article" date="2004" name="Cytogenet. Genome Res.">
        <title>Cloning and characterization of the mouse Arht2 gene which encodes a putative atypical GTPase.</title>
        <authorList>
            <person name="Shan Y."/>
            <person name="Hexige S."/>
            <person name="Guo Z."/>
            <person name="Wan B."/>
            <person name="Chen K."/>
            <person name="Chen X."/>
            <person name="Ma L."/>
            <person name="Huang C."/>
            <person name="Zhao S."/>
            <person name="Yu L."/>
        </authorList>
    </citation>
    <scope>NUCLEOTIDE SEQUENCE [MRNA] (ISOFORM 1)</scope>
    <scope>TISSUE SPECIFICITY</scope>
</reference>
<reference key="3">
    <citation type="journal article" date="2004" name="Nat. Genet.">
        <title>Complete sequencing and characterization of 21,243 full-length human cDNAs.</title>
        <authorList>
            <person name="Ota T."/>
            <person name="Suzuki Y."/>
            <person name="Nishikawa T."/>
            <person name="Otsuki T."/>
            <person name="Sugiyama T."/>
            <person name="Irie R."/>
            <person name="Wakamatsu A."/>
            <person name="Hayashi K."/>
            <person name="Sato H."/>
            <person name="Nagai K."/>
            <person name="Kimura K."/>
            <person name="Makita H."/>
            <person name="Sekine M."/>
            <person name="Obayashi M."/>
            <person name="Nishi T."/>
            <person name="Shibahara T."/>
            <person name="Tanaka T."/>
            <person name="Ishii S."/>
            <person name="Yamamoto J."/>
            <person name="Saito K."/>
            <person name="Kawai Y."/>
            <person name="Isono Y."/>
            <person name="Nakamura Y."/>
            <person name="Nagahari K."/>
            <person name="Murakami K."/>
            <person name="Yasuda T."/>
            <person name="Iwayanagi T."/>
            <person name="Wagatsuma M."/>
            <person name="Shiratori A."/>
            <person name="Sudo H."/>
            <person name="Hosoiri T."/>
            <person name="Kaku Y."/>
            <person name="Kodaira H."/>
            <person name="Kondo H."/>
            <person name="Sugawara M."/>
            <person name="Takahashi M."/>
            <person name="Kanda K."/>
            <person name="Yokoi T."/>
            <person name="Furuya T."/>
            <person name="Kikkawa E."/>
            <person name="Omura Y."/>
            <person name="Abe K."/>
            <person name="Kamihara K."/>
            <person name="Katsuta N."/>
            <person name="Sato K."/>
            <person name="Tanikawa M."/>
            <person name="Yamazaki M."/>
            <person name="Ninomiya K."/>
            <person name="Ishibashi T."/>
            <person name="Yamashita H."/>
            <person name="Murakawa K."/>
            <person name="Fujimori K."/>
            <person name="Tanai H."/>
            <person name="Kimata M."/>
            <person name="Watanabe M."/>
            <person name="Hiraoka S."/>
            <person name="Chiba Y."/>
            <person name="Ishida S."/>
            <person name="Ono Y."/>
            <person name="Takiguchi S."/>
            <person name="Watanabe S."/>
            <person name="Yosida M."/>
            <person name="Hotuta T."/>
            <person name="Kusano J."/>
            <person name="Kanehori K."/>
            <person name="Takahashi-Fujii A."/>
            <person name="Hara H."/>
            <person name="Tanase T.-O."/>
            <person name="Nomura Y."/>
            <person name="Togiya S."/>
            <person name="Komai F."/>
            <person name="Hara R."/>
            <person name="Takeuchi K."/>
            <person name="Arita M."/>
            <person name="Imose N."/>
            <person name="Musashino K."/>
            <person name="Yuuki H."/>
            <person name="Oshima A."/>
            <person name="Sasaki N."/>
            <person name="Aotsuka S."/>
            <person name="Yoshikawa Y."/>
            <person name="Matsunawa H."/>
            <person name="Ichihara T."/>
            <person name="Shiohata N."/>
            <person name="Sano S."/>
            <person name="Moriya S."/>
            <person name="Momiyama H."/>
            <person name="Satoh N."/>
            <person name="Takami S."/>
            <person name="Terashima Y."/>
            <person name="Suzuki O."/>
            <person name="Nakagawa S."/>
            <person name="Senoh A."/>
            <person name="Mizoguchi H."/>
            <person name="Goto Y."/>
            <person name="Shimizu F."/>
            <person name="Wakebe H."/>
            <person name="Hishigaki H."/>
            <person name="Watanabe T."/>
            <person name="Sugiyama A."/>
            <person name="Takemoto M."/>
            <person name="Kawakami B."/>
            <person name="Yamazaki M."/>
            <person name="Watanabe K."/>
            <person name="Kumagai A."/>
            <person name="Itakura S."/>
            <person name="Fukuzumi Y."/>
            <person name="Fujimori Y."/>
            <person name="Komiyama M."/>
            <person name="Tashiro H."/>
            <person name="Tanigami A."/>
            <person name="Fujiwara T."/>
            <person name="Ono T."/>
            <person name="Yamada K."/>
            <person name="Fujii Y."/>
            <person name="Ozaki K."/>
            <person name="Hirao M."/>
            <person name="Ohmori Y."/>
            <person name="Kawabata A."/>
            <person name="Hikiji T."/>
            <person name="Kobatake N."/>
            <person name="Inagaki H."/>
            <person name="Ikema Y."/>
            <person name="Okamoto S."/>
            <person name="Okitani R."/>
            <person name="Kawakami T."/>
            <person name="Noguchi S."/>
            <person name="Itoh T."/>
            <person name="Shigeta K."/>
            <person name="Senba T."/>
            <person name="Matsumura K."/>
            <person name="Nakajima Y."/>
            <person name="Mizuno T."/>
            <person name="Morinaga M."/>
            <person name="Sasaki M."/>
            <person name="Togashi T."/>
            <person name="Oyama M."/>
            <person name="Hata H."/>
            <person name="Watanabe M."/>
            <person name="Komatsu T."/>
            <person name="Mizushima-Sugano J."/>
            <person name="Satoh T."/>
            <person name="Shirai Y."/>
            <person name="Takahashi Y."/>
            <person name="Nakagawa K."/>
            <person name="Okumura K."/>
            <person name="Nagase T."/>
            <person name="Nomura N."/>
            <person name="Kikuchi H."/>
            <person name="Masuho Y."/>
            <person name="Yamashita R."/>
            <person name="Nakai K."/>
            <person name="Yada T."/>
            <person name="Nakamura Y."/>
            <person name="Ohara O."/>
            <person name="Isogai T."/>
            <person name="Sugano S."/>
        </authorList>
    </citation>
    <scope>NUCLEOTIDE SEQUENCE [LARGE SCALE MRNA] (ISOFORM 2)</scope>
    <source>
        <tissue>Spleen</tissue>
    </source>
</reference>
<reference key="4">
    <citation type="submission" date="2002-07" db="EMBL/GenBank/DDBJ databases">
        <title>The nucleotide sequence of a long cDNA clone isolated from human spleen.</title>
        <authorList>
            <person name="Jikuya H."/>
            <person name="Takano J."/>
            <person name="Kikuno R."/>
            <person name="Nagase T."/>
            <person name="Ohara O."/>
        </authorList>
    </citation>
    <scope>NUCLEOTIDE SEQUENCE [LARGE SCALE MRNA] (ISOFORM 2)</scope>
    <source>
        <tissue>Spleen</tissue>
    </source>
</reference>
<reference key="5">
    <citation type="journal article" date="2001" name="Hum. Mol. Genet.">
        <title>Sequence, structure and pathology of the fully annotated terminal 2 Mb of the short arm of human chromosome 16.</title>
        <authorList>
            <person name="Daniels R.J."/>
            <person name="Peden J.F."/>
            <person name="Lloyd C."/>
            <person name="Horsley S.W."/>
            <person name="Clark K."/>
            <person name="Tufarelli C."/>
            <person name="Kearney L."/>
            <person name="Buckle V.J."/>
            <person name="Doggett N.A."/>
            <person name="Flint J."/>
            <person name="Higgs D.R."/>
        </authorList>
    </citation>
    <scope>NUCLEOTIDE SEQUENCE [LARGE SCALE GENOMIC DNA]</scope>
</reference>
<reference key="6">
    <citation type="submission" date="2005-09" db="EMBL/GenBank/DDBJ databases">
        <authorList>
            <person name="Mural R.J."/>
            <person name="Istrail S."/>
            <person name="Sutton G.G."/>
            <person name="Florea L."/>
            <person name="Halpern A.L."/>
            <person name="Mobarry C.M."/>
            <person name="Lippert R."/>
            <person name="Walenz B."/>
            <person name="Shatkay H."/>
            <person name="Dew I."/>
            <person name="Miller J.R."/>
            <person name="Flanigan M.J."/>
            <person name="Edwards N.J."/>
            <person name="Bolanos R."/>
            <person name="Fasulo D."/>
            <person name="Halldorsson B.V."/>
            <person name="Hannenhalli S."/>
            <person name="Turner R."/>
            <person name="Yooseph S."/>
            <person name="Lu F."/>
            <person name="Nusskern D.R."/>
            <person name="Shue B.C."/>
            <person name="Zheng X.H."/>
            <person name="Zhong F."/>
            <person name="Delcher A.L."/>
            <person name="Huson D.H."/>
            <person name="Kravitz S.A."/>
            <person name="Mouchard L."/>
            <person name="Reinert K."/>
            <person name="Remington K.A."/>
            <person name="Clark A.G."/>
            <person name="Waterman M.S."/>
            <person name="Eichler E.E."/>
            <person name="Adams M.D."/>
            <person name="Hunkapiller M.W."/>
            <person name="Myers E.W."/>
            <person name="Venter J.C."/>
        </authorList>
    </citation>
    <scope>NUCLEOTIDE SEQUENCE [LARGE SCALE GENOMIC DNA]</scope>
</reference>
<reference key="7">
    <citation type="journal article" date="2004" name="Nature">
        <title>The sequence and analysis of duplication-rich human chromosome 16.</title>
        <authorList>
            <person name="Martin J."/>
            <person name="Han C."/>
            <person name="Gordon L.A."/>
            <person name="Terry A."/>
            <person name="Prabhakar S."/>
            <person name="She X."/>
            <person name="Xie G."/>
            <person name="Hellsten U."/>
            <person name="Chan Y.M."/>
            <person name="Altherr M."/>
            <person name="Couronne O."/>
            <person name="Aerts A."/>
            <person name="Bajorek E."/>
            <person name="Black S."/>
            <person name="Blumer H."/>
            <person name="Branscomb E."/>
            <person name="Brown N.C."/>
            <person name="Bruno W.J."/>
            <person name="Buckingham J.M."/>
            <person name="Callen D.F."/>
            <person name="Campbell C.S."/>
            <person name="Campbell M.L."/>
            <person name="Campbell E.W."/>
            <person name="Caoile C."/>
            <person name="Challacombe J.F."/>
            <person name="Chasteen L.A."/>
            <person name="Chertkov O."/>
            <person name="Chi H.C."/>
            <person name="Christensen M."/>
            <person name="Clark L.M."/>
            <person name="Cohn J.D."/>
            <person name="Denys M."/>
            <person name="Detter J.C."/>
            <person name="Dickson M."/>
            <person name="Dimitrijevic-Bussod M."/>
            <person name="Escobar J."/>
            <person name="Fawcett J.J."/>
            <person name="Flowers D."/>
            <person name="Fotopulos D."/>
            <person name="Glavina T."/>
            <person name="Gomez M."/>
            <person name="Gonzales E."/>
            <person name="Goodstein D."/>
            <person name="Goodwin L.A."/>
            <person name="Grady D.L."/>
            <person name="Grigoriev I."/>
            <person name="Groza M."/>
            <person name="Hammon N."/>
            <person name="Hawkins T."/>
            <person name="Haydu L."/>
            <person name="Hildebrand C.E."/>
            <person name="Huang W."/>
            <person name="Israni S."/>
            <person name="Jett J."/>
            <person name="Jewett P.B."/>
            <person name="Kadner K."/>
            <person name="Kimball H."/>
            <person name="Kobayashi A."/>
            <person name="Krawczyk M.-C."/>
            <person name="Leyba T."/>
            <person name="Longmire J.L."/>
            <person name="Lopez F."/>
            <person name="Lou Y."/>
            <person name="Lowry S."/>
            <person name="Ludeman T."/>
            <person name="Manohar C.F."/>
            <person name="Mark G.A."/>
            <person name="McMurray K.L."/>
            <person name="Meincke L.J."/>
            <person name="Morgan J."/>
            <person name="Moyzis R.K."/>
            <person name="Mundt M.O."/>
            <person name="Munk A.C."/>
            <person name="Nandkeshwar R.D."/>
            <person name="Pitluck S."/>
            <person name="Pollard M."/>
            <person name="Predki P."/>
            <person name="Parson-Quintana B."/>
            <person name="Ramirez L."/>
            <person name="Rash S."/>
            <person name="Retterer J."/>
            <person name="Ricke D.O."/>
            <person name="Robinson D.L."/>
            <person name="Rodriguez A."/>
            <person name="Salamov A."/>
            <person name="Saunders E.H."/>
            <person name="Scott D."/>
            <person name="Shough T."/>
            <person name="Stallings R.L."/>
            <person name="Stalvey M."/>
            <person name="Sutherland R.D."/>
            <person name="Tapia R."/>
            <person name="Tesmer J.G."/>
            <person name="Thayer N."/>
            <person name="Thompson L.S."/>
            <person name="Tice H."/>
            <person name="Torney D.C."/>
            <person name="Tran-Gyamfi M."/>
            <person name="Tsai M."/>
            <person name="Ulanovsky L.E."/>
            <person name="Ustaszewska A."/>
            <person name="Vo N."/>
            <person name="White P.S."/>
            <person name="Williams A.L."/>
            <person name="Wills P.L."/>
            <person name="Wu J.-R."/>
            <person name="Wu K."/>
            <person name="Yang J."/>
            <person name="DeJong P."/>
            <person name="Bruce D."/>
            <person name="Doggett N.A."/>
            <person name="Deaven L."/>
            <person name="Schmutz J."/>
            <person name="Grimwood J."/>
            <person name="Richardson P."/>
            <person name="Rokhsar D.S."/>
            <person name="Eichler E.E."/>
            <person name="Gilna P."/>
            <person name="Lucas S.M."/>
            <person name="Myers R.M."/>
            <person name="Rubin E.M."/>
            <person name="Pennacchio L.A."/>
        </authorList>
    </citation>
    <scope>NUCLEOTIDE SEQUENCE [LARGE SCALE GENOMIC DNA]</scope>
</reference>
<reference key="8">
    <citation type="journal article" date="2004" name="Genome Res.">
        <title>The status, quality, and expansion of the NIH full-length cDNA project: the Mammalian Gene Collection (MGC).</title>
        <authorList>
            <consortium name="The MGC Project Team"/>
        </authorList>
    </citation>
    <scope>NUCLEOTIDE SEQUENCE [LARGE SCALE MRNA] (ISOFORM 1)</scope>
    <source>
        <tissue>Placenta</tissue>
        <tissue>Skin</tissue>
    </source>
</reference>
<reference key="9">
    <citation type="journal article" date="2004" name="Biochem. J.">
        <title>Rho GTPases have diverse effects on the organization of the actin filament system.</title>
        <authorList>
            <person name="Aspenstroem P."/>
            <person name="Fransson A."/>
            <person name="Saras J."/>
        </authorList>
    </citation>
    <scope>MUTAGENESIS OF ALA-13</scope>
</reference>
<reference key="10">
    <citation type="journal article" date="2006" name="Biochem. Biophys. Res. Commun.">
        <title>The atypical Rho GTPases Miro-1 and Miro-2 have essential roles in mitochondrial trafficking.</title>
        <authorList>
            <person name="Fransson S."/>
            <person name="Ruusala A."/>
            <person name="Aspenstroem P."/>
        </authorList>
    </citation>
    <scope>FUNCTION</scope>
    <scope>INTERACTION WITH TRAK1 AND TRAK2</scope>
    <scope>MUTAGENESIS OF ALA-13 AND THR-18</scope>
</reference>
<reference key="11">
    <citation type="journal article" date="2009" name="J. Cell Biol.">
        <title>HUMMR, a hypoxia- and HIF-1alpha-inducible protein, alters mitochondrial distribution and transport.</title>
        <authorList>
            <person name="Li Y."/>
            <person name="Lim S."/>
            <person name="Hoffman D."/>
            <person name="Aspenstrom P."/>
            <person name="Federoff H.J."/>
            <person name="Rempe D.A."/>
        </authorList>
    </citation>
    <scope>SUBCELLULAR LOCATION</scope>
</reference>
<reference key="12">
    <citation type="journal article" date="2011" name="BMC Syst. Biol.">
        <title>Initial characterization of the human central proteome.</title>
        <authorList>
            <person name="Burkard T.R."/>
            <person name="Planyavsky M."/>
            <person name="Kaupe I."/>
            <person name="Breitwieser F.P."/>
            <person name="Buerckstuemmer T."/>
            <person name="Bennett K.L."/>
            <person name="Superti-Furga G."/>
            <person name="Colinge J."/>
        </authorList>
    </citation>
    <scope>IDENTIFICATION BY MASS SPECTROMETRY [LARGE SCALE ANALYSIS]</scope>
</reference>
<reference key="13">
    <citation type="journal article" date="2012" name="PLoS Genet.">
        <title>Parkinson's disease-associated kinase PINK1 regulates Miro protein level and axonal transport of mitochondria.</title>
        <authorList>
            <person name="Liu S."/>
            <person name="Sawada T."/>
            <person name="Lee S."/>
            <person name="Yu W."/>
            <person name="Silverio G."/>
            <person name="Alapatt P."/>
            <person name="Millan I."/>
            <person name="Shen A."/>
            <person name="Saxton W."/>
            <person name="Kanao T."/>
            <person name="Takahashi R."/>
            <person name="Hattori N."/>
            <person name="Imai Y."/>
            <person name="Lu B."/>
        </authorList>
    </citation>
    <scope>FUNCTION</scope>
    <scope>UBIQUITINATION</scope>
</reference>
<reference key="14">
    <citation type="journal article" date="2014" name="Cell">
        <title>Glucose regulates mitochondrial motility via Milton modification by O-GlcNAc transferase.</title>
        <authorList>
            <person name="Pekkurnaz G."/>
            <person name="Trinidad J.C."/>
            <person name="Wang X."/>
            <person name="Kong D."/>
            <person name="Schwarz T.L."/>
        </authorList>
    </citation>
    <scope>INTERACTION WITH KIF5B; OGT; RHOT1 AND TRAK1</scope>
</reference>
<reference key="15">
    <citation type="journal article" date="2015" name="Proteomics">
        <title>N-terminome analysis of the human mitochondrial proteome.</title>
        <authorList>
            <person name="Vaca Jacome A.S."/>
            <person name="Rabilloud T."/>
            <person name="Schaeffer-Reiss C."/>
            <person name="Rompais M."/>
            <person name="Ayoub D."/>
            <person name="Lane L."/>
            <person name="Bairoch A."/>
            <person name="Van Dorsselaer A."/>
            <person name="Carapito C."/>
        </authorList>
    </citation>
    <scope>IDENTIFICATION BY MASS SPECTROMETRY [LARGE SCALE ANALYSIS]</scope>
</reference>
<reference key="16">
    <citation type="journal article" date="2018" name="Int. J. Mol. Sci.">
        <title>Human Miro Proteins Act as NTP Hydrolases through a Novel, Non-Canonical Catalytic Mechanism.</title>
        <authorList>
            <person name="Peters D.T."/>
            <person name="Kay L."/>
            <person name="Eswaran J."/>
            <person name="Lakey J.H."/>
            <person name="Soundararajan M."/>
        </authorList>
    </citation>
    <scope>FUNCTION</scope>
    <scope>CATALYTIC ACTIVITY</scope>
</reference>
<reference evidence="20" key="17">
    <citation type="journal article" date="2016" name="Sci. Rep.">
        <title>Structural insights into Parkin substrate lysine targeting from minimal Miro substrates.</title>
        <authorList>
            <person name="Klosowiak J.L."/>
            <person name="Park S."/>
            <person name="Smith K.P."/>
            <person name="French M.E."/>
            <person name="Focia P.J."/>
            <person name="Freymann D.M."/>
            <person name="Rice S.E."/>
        </authorList>
    </citation>
    <scope>X-RAY CRYSTALLOGRAPHY (1.69 ANGSTROMS) OF 409-588 IN COMPLEX WITH GDP AND MG(2+)</scope>
    <scope>SUBUNIT</scope>
    <scope>UBIQUITINATION AT LYS-96; LYS-119 AND LYS-164</scope>
</reference>